<sequence>MVVKVGINGFGRIGRLAFRRIQNIEGVEVTRINDLTDPNMLAHLLKYDTTQGRFDGTVEVKEGGFEVNGNFIKVSAERDPENIDWATDGVEIVLEATGFFAKKEAAEKHLHANGAKKVVITAPGGNDVKTVVFNTNHDILDGTETVISGASCTTNCLAPMAKALHDAFGIQKGLMTTIHAYTGDQMILDGPHRGGDLRRARAGAANIVPNSTGAAKAIGLVIPELNGKLDGAAQRVPVPTGSVTELVVTLDKNVSVDEINAAMKAASNDSFGYTEDPIVSSDIVGVSYGSLFDATQTKVMEVDGSQLVKVVSWYDNEMSYTAQLVRTLEYFAKIAK</sequence>
<reference key="1">
    <citation type="journal article" date="2001" name="Proc. Natl. Acad. Sci. U.S.A.">
        <title>Complete genome sequence of an M1 strain of Streptococcus pyogenes.</title>
        <authorList>
            <person name="Ferretti J.J."/>
            <person name="McShan W.M."/>
            <person name="Ajdic D.J."/>
            <person name="Savic D.J."/>
            <person name="Savic G."/>
            <person name="Lyon K."/>
            <person name="Primeaux C."/>
            <person name="Sezate S."/>
            <person name="Suvorov A.N."/>
            <person name="Kenton S."/>
            <person name="Lai H.S."/>
            <person name="Lin S.P."/>
            <person name="Qian Y."/>
            <person name="Jia H.G."/>
            <person name="Najar F.Z."/>
            <person name="Ren Q."/>
            <person name="Zhu H."/>
            <person name="Song L."/>
            <person name="White J."/>
            <person name="Yuan X."/>
            <person name="Clifton S.W."/>
            <person name="Roe B.A."/>
            <person name="McLaughlin R.E."/>
        </authorList>
    </citation>
    <scope>NUCLEOTIDE SEQUENCE [LARGE SCALE GENOMIC DNA]</scope>
    <source>
        <strain>ATCC 700294 / SF370 / Serotype M1</strain>
    </source>
</reference>
<reference key="2">
    <citation type="journal article" date="2005" name="J. Infect. Dis.">
        <title>Evolutionary origin and emergence of a highly successful clone of serotype M1 group A Streptococcus involved multiple horizontal gene transfer events.</title>
        <authorList>
            <person name="Sumby P."/>
            <person name="Porcella S.F."/>
            <person name="Madrigal A.G."/>
            <person name="Barbian K.D."/>
            <person name="Virtaneva K."/>
            <person name="Ricklefs S.M."/>
            <person name="Sturdevant D.E."/>
            <person name="Graham M.R."/>
            <person name="Vuopio-Varkila J."/>
            <person name="Hoe N.P."/>
            <person name="Musser J.M."/>
        </authorList>
    </citation>
    <scope>NUCLEOTIDE SEQUENCE [LARGE SCALE GENOMIC DNA]</scope>
    <source>
        <strain>ATCC BAA-947 / MGAS5005 / Serotype M1</strain>
    </source>
</reference>
<evidence type="ECO:0000250" key="1"/>
<evidence type="ECO:0000250" key="2">
    <source>
        <dbReference type="UniProtKB" id="P00362"/>
    </source>
</evidence>
<evidence type="ECO:0000250" key="3">
    <source>
        <dbReference type="UniProtKB" id="P09124"/>
    </source>
</evidence>
<evidence type="ECO:0000250" key="4">
    <source>
        <dbReference type="UniProtKB" id="Q6GIL8"/>
    </source>
</evidence>
<evidence type="ECO:0000269" key="5">
    <source>
    </source>
</evidence>
<evidence type="ECO:0000303" key="6">
    <source>
    </source>
</evidence>
<evidence type="ECO:0000305" key="7"/>
<feature type="initiator methionine" description="Removed" evidence="1">
    <location>
        <position position="1"/>
    </location>
</feature>
<feature type="chain" id="PRO_0000145704" description="Glyceraldehyde-3-phosphate dehydrogenase">
    <location>
        <begin position="2"/>
        <end position="336"/>
    </location>
</feature>
<feature type="active site" description="Nucleophile" evidence="2">
    <location>
        <position position="152"/>
    </location>
</feature>
<feature type="binding site" evidence="2">
    <location>
        <begin position="12"/>
        <end position="13"/>
    </location>
    <ligand>
        <name>NAD(+)</name>
        <dbReference type="ChEBI" id="CHEBI:57540"/>
    </ligand>
</feature>
<feature type="binding site" evidence="2">
    <location>
        <position position="34"/>
    </location>
    <ligand>
        <name>NAD(+)</name>
        <dbReference type="ChEBI" id="CHEBI:57540"/>
    </ligand>
</feature>
<feature type="binding site" evidence="2">
    <location>
        <position position="78"/>
    </location>
    <ligand>
        <name>NAD(+)</name>
        <dbReference type="ChEBI" id="CHEBI:57540"/>
    </ligand>
</feature>
<feature type="binding site" evidence="2">
    <location>
        <position position="121"/>
    </location>
    <ligand>
        <name>NAD(+)</name>
        <dbReference type="ChEBI" id="CHEBI:57540"/>
    </ligand>
</feature>
<feature type="binding site" evidence="2">
    <location>
        <begin position="151"/>
        <end position="153"/>
    </location>
    <ligand>
        <name>D-glyceraldehyde 3-phosphate</name>
        <dbReference type="ChEBI" id="CHEBI:59776"/>
    </ligand>
</feature>
<feature type="binding site" evidence="2">
    <location>
        <position position="182"/>
    </location>
    <ligand>
        <name>D-glyceraldehyde 3-phosphate</name>
        <dbReference type="ChEBI" id="CHEBI:59776"/>
    </ligand>
</feature>
<feature type="binding site" evidence="2">
    <location>
        <position position="199"/>
    </location>
    <ligand>
        <name>D-glyceraldehyde 3-phosphate</name>
        <dbReference type="ChEBI" id="CHEBI:59776"/>
    </ligand>
</feature>
<feature type="binding site" evidence="2">
    <location>
        <begin position="212"/>
        <end position="213"/>
    </location>
    <ligand>
        <name>D-glyceraldehyde 3-phosphate</name>
        <dbReference type="ChEBI" id="CHEBI:59776"/>
    </ligand>
</feature>
<feature type="binding site" evidence="2">
    <location>
        <position position="235"/>
    </location>
    <ligand>
        <name>D-glyceraldehyde 3-phosphate</name>
        <dbReference type="ChEBI" id="CHEBI:59776"/>
    </ligand>
</feature>
<feature type="binding site" evidence="2">
    <location>
        <position position="316"/>
    </location>
    <ligand>
        <name>NAD(+)</name>
        <dbReference type="ChEBI" id="CHEBI:57540"/>
    </ligand>
</feature>
<feature type="site" description="Activates thiol group during catalysis" evidence="4">
    <location>
        <position position="179"/>
    </location>
</feature>
<accession>P0C0G7</accession>
<accession>P50467</accession>
<accession>P68776</accession>
<accession>Q490W6</accession>
<keyword id="KW-0963">Cytoplasm</keyword>
<keyword id="KW-0324">Glycolysis</keyword>
<keyword id="KW-0520">NAD</keyword>
<keyword id="KW-0547">Nucleotide-binding</keyword>
<keyword id="KW-0560">Oxidoreductase</keyword>
<keyword id="KW-1185">Reference proteome</keyword>
<protein>
    <recommendedName>
        <fullName evidence="2">Glyceraldehyde-3-phosphate dehydrogenase</fullName>
        <shortName evidence="2">GAPDH</shortName>
        <ecNumber evidence="3">1.2.1.12</ecNumber>
    </recommendedName>
    <alternativeName>
        <fullName evidence="2">NAD-dependent glyceraldehyde-3-phosphate dehydrogenase</fullName>
    </alternativeName>
    <alternativeName>
        <fullName evidence="6">Plasmin receptor</fullName>
    </alternativeName>
    <alternativeName>
        <fullName evidence="6">Plasminogen-binding protein</fullName>
    </alternativeName>
</protein>
<name>G3P_STRP1</name>
<organism>
    <name type="scientific">Streptococcus pyogenes serotype M1</name>
    <dbReference type="NCBI Taxonomy" id="301447"/>
    <lineage>
        <taxon>Bacteria</taxon>
        <taxon>Bacillati</taxon>
        <taxon>Bacillota</taxon>
        <taxon>Bacilli</taxon>
        <taxon>Lactobacillales</taxon>
        <taxon>Streptococcaceae</taxon>
        <taxon>Streptococcus</taxon>
    </lineage>
</organism>
<proteinExistence type="inferred from homology"/>
<gene>
    <name type="primary">gap</name>
    <name type="synonym">gapA</name>
    <name type="synonym">plr</name>
    <name type="ordered locus">SPy_0274</name>
    <name type="ordered locus">M5005_Spy0233</name>
</gene>
<comment type="function">
    <text evidence="2">Catalyzes the oxidative phosphorylation of glyceraldehyde 3-phosphate (G3P) to 1,3-bisphosphoglycerate (BPG) using the cofactor NAD. The first reaction step involves the formation of a hemiacetal intermediate between G3P and a cysteine residue, and this hemiacetal intermediate is then oxidized to a thioester, with concomitant reduction of NAD to NADH. The reduced NADH is then exchanged with the second NAD, and the thioester is attacked by a nucleophilic inorganic phosphate to produce BPG.</text>
</comment>
<comment type="catalytic activity">
    <reaction evidence="3">
        <text>D-glyceraldehyde 3-phosphate + phosphate + NAD(+) = (2R)-3-phospho-glyceroyl phosphate + NADH + H(+)</text>
        <dbReference type="Rhea" id="RHEA:10300"/>
        <dbReference type="ChEBI" id="CHEBI:15378"/>
        <dbReference type="ChEBI" id="CHEBI:43474"/>
        <dbReference type="ChEBI" id="CHEBI:57540"/>
        <dbReference type="ChEBI" id="CHEBI:57604"/>
        <dbReference type="ChEBI" id="CHEBI:57945"/>
        <dbReference type="ChEBI" id="CHEBI:59776"/>
        <dbReference type="EC" id="1.2.1.12"/>
    </reaction>
</comment>
<comment type="pathway">
    <text evidence="7">Carbohydrate degradation; glycolysis; pyruvate from D-glyceraldehyde 3-phosphate: step 1/5.</text>
</comment>
<comment type="subunit">
    <text evidence="2">Homotetramer.</text>
</comment>
<comment type="subcellular location">
    <subcellularLocation>
        <location evidence="7">Cytoplasm</location>
    </subcellularLocation>
</comment>
<comment type="miscellaneous">
    <text evidence="5">Binds human plasminogen.</text>
</comment>
<comment type="similarity">
    <text evidence="7">Belongs to the glyceraldehyde-3-phosphate dehydrogenase family.</text>
</comment>
<dbReference type="EC" id="1.2.1.12" evidence="3"/>
<dbReference type="EMBL" id="AE004092">
    <property type="protein sequence ID" value="AAK33348.1"/>
    <property type="molecule type" value="Genomic_DNA"/>
</dbReference>
<dbReference type="EMBL" id="CP000017">
    <property type="protein sequence ID" value="AAZ50852.1"/>
    <property type="molecule type" value="Genomic_DNA"/>
</dbReference>
<dbReference type="RefSeq" id="NP_268627.1">
    <property type="nucleotide sequence ID" value="NC_002737.2"/>
</dbReference>
<dbReference type="SMR" id="P0C0G7"/>
<dbReference type="PaxDb" id="1314-HKU360_00273"/>
<dbReference type="KEGG" id="spy:SPy_0274"/>
<dbReference type="KEGG" id="spz:M5005_Spy0233"/>
<dbReference type="PATRIC" id="fig|160490.10.peg.241"/>
<dbReference type="HOGENOM" id="CLU_030140_0_3_9"/>
<dbReference type="OMA" id="YGYTCNM"/>
<dbReference type="UniPathway" id="UPA00109">
    <property type="reaction ID" value="UER00184"/>
</dbReference>
<dbReference type="Proteomes" id="UP000000750">
    <property type="component" value="Chromosome"/>
</dbReference>
<dbReference type="GO" id="GO:0005737">
    <property type="term" value="C:cytoplasm"/>
    <property type="evidence" value="ECO:0007669"/>
    <property type="project" value="UniProtKB-SubCell"/>
</dbReference>
<dbReference type="GO" id="GO:0004365">
    <property type="term" value="F:glyceraldehyde-3-phosphate dehydrogenase (NAD+) (phosphorylating) activity"/>
    <property type="evidence" value="ECO:0000250"/>
    <property type="project" value="UniProtKB"/>
</dbReference>
<dbReference type="GO" id="GO:0051287">
    <property type="term" value="F:NAD binding"/>
    <property type="evidence" value="ECO:0000250"/>
    <property type="project" value="UniProtKB"/>
</dbReference>
<dbReference type="GO" id="GO:0050661">
    <property type="term" value="F:NADP binding"/>
    <property type="evidence" value="ECO:0007669"/>
    <property type="project" value="InterPro"/>
</dbReference>
<dbReference type="GO" id="GO:0019904">
    <property type="term" value="F:protein domain specific binding"/>
    <property type="evidence" value="ECO:0000353"/>
    <property type="project" value="CAFA"/>
</dbReference>
<dbReference type="GO" id="GO:0006006">
    <property type="term" value="P:glucose metabolic process"/>
    <property type="evidence" value="ECO:0007669"/>
    <property type="project" value="InterPro"/>
</dbReference>
<dbReference type="GO" id="GO:0006096">
    <property type="term" value="P:glycolytic process"/>
    <property type="evidence" value="ECO:0000250"/>
    <property type="project" value="CAFA"/>
</dbReference>
<dbReference type="CDD" id="cd18126">
    <property type="entry name" value="GAPDH_I_C"/>
    <property type="match status" value="1"/>
</dbReference>
<dbReference type="CDD" id="cd05214">
    <property type="entry name" value="GAPDH_I_N"/>
    <property type="match status" value="1"/>
</dbReference>
<dbReference type="FunFam" id="3.30.360.10:FF:000002">
    <property type="entry name" value="Glyceraldehyde-3-phosphate dehydrogenase"/>
    <property type="match status" value="1"/>
</dbReference>
<dbReference type="FunFam" id="3.40.50.720:FF:000001">
    <property type="entry name" value="Glyceraldehyde-3-phosphate dehydrogenase"/>
    <property type="match status" value="1"/>
</dbReference>
<dbReference type="Gene3D" id="3.30.360.10">
    <property type="entry name" value="Dihydrodipicolinate Reductase, domain 2"/>
    <property type="match status" value="1"/>
</dbReference>
<dbReference type="Gene3D" id="3.40.50.720">
    <property type="entry name" value="NAD(P)-binding Rossmann-like Domain"/>
    <property type="match status" value="1"/>
</dbReference>
<dbReference type="InterPro" id="IPR020831">
    <property type="entry name" value="GlycerAld/Erythrose_P_DH"/>
</dbReference>
<dbReference type="InterPro" id="IPR020830">
    <property type="entry name" value="GlycerAld_3-P_DH_AS"/>
</dbReference>
<dbReference type="InterPro" id="IPR020829">
    <property type="entry name" value="GlycerAld_3-P_DH_cat"/>
</dbReference>
<dbReference type="InterPro" id="IPR020828">
    <property type="entry name" value="GlycerAld_3-P_DH_NAD(P)-bd"/>
</dbReference>
<dbReference type="InterPro" id="IPR006424">
    <property type="entry name" value="Glyceraldehyde-3-P_DH_1"/>
</dbReference>
<dbReference type="InterPro" id="IPR036291">
    <property type="entry name" value="NAD(P)-bd_dom_sf"/>
</dbReference>
<dbReference type="NCBIfam" id="TIGR01534">
    <property type="entry name" value="GAPDH-I"/>
    <property type="match status" value="1"/>
</dbReference>
<dbReference type="PANTHER" id="PTHR43148">
    <property type="entry name" value="GLYCERALDEHYDE-3-PHOSPHATE DEHYDROGENASE 2"/>
    <property type="match status" value="1"/>
</dbReference>
<dbReference type="Pfam" id="PF02800">
    <property type="entry name" value="Gp_dh_C"/>
    <property type="match status" value="1"/>
</dbReference>
<dbReference type="Pfam" id="PF00044">
    <property type="entry name" value="Gp_dh_N"/>
    <property type="match status" value="1"/>
</dbReference>
<dbReference type="PIRSF" id="PIRSF000149">
    <property type="entry name" value="GAP_DH"/>
    <property type="match status" value="1"/>
</dbReference>
<dbReference type="PRINTS" id="PR00078">
    <property type="entry name" value="G3PDHDRGNASE"/>
</dbReference>
<dbReference type="SMART" id="SM00846">
    <property type="entry name" value="Gp_dh_N"/>
    <property type="match status" value="1"/>
</dbReference>
<dbReference type="SUPFAM" id="SSF55347">
    <property type="entry name" value="Glyceraldehyde-3-phosphate dehydrogenase-like, C-terminal domain"/>
    <property type="match status" value="1"/>
</dbReference>
<dbReference type="SUPFAM" id="SSF51735">
    <property type="entry name" value="NAD(P)-binding Rossmann-fold domains"/>
    <property type="match status" value="1"/>
</dbReference>
<dbReference type="PROSITE" id="PS00071">
    <property type="entry name" value="GAPDH"/>
    <property type="match status" value="1"/>
</dbReference>